<reference key="1">
    <citation type="submission" date="2007-10" db="EMBL/GenBank/DDBJ databases">
        <title>Complete genome of Alkaliphilus oremlandii OhILAs.</title>
        <authorList>
            <person name="Copeland A."/>
            <person name="Lucas S."/>
            <person name="Lapidus A."/>
            <person name="Barry K."/>
            <person name="Detter J.C."/>
            <person name="Glavina del Rio T."/>
            <person name="Hammon N."/>
            <person name="Israni S."/>
            <person name="Dalin E."/>
            <person name="Tice H."/>
            <person name="Pitluck S."/>
            <person name="Chain P."/>
            <person name="Malfatti S."/>
            <person name="Shin M."/>
            <person name="Vergez L."/>
            <person name="Schmutz J."/>
            <person name="Larimer F."/>
            <person name="Land M."/>
            <person name="Hauser L."/>
            <person name="Kyrpides N."/>
            <person name="Mikhailova N."/>
            <person name="Stolz J.F."/>
            <person name="Dawson A."/>
            <person name="Fisher E."/>
            <person name="Crable B."/>
            <person name="Perera E."/>
            <person name="Lisak J."/>
            <person name="Ranganathan M."/>
            <person name="Basu P."/>
            <person name="Richardson P."/>
        </authorList>
    </citation>
    <scope>NUCLEOTIDE SEQUENCE [LARGE SCALE GENOMIC DNA]</scope>
    <source>
        <strain>OhILAs</strain>
    </source>
</reference>
<protein>
    <recommendedName>
        <fullName evidence="2">Small ribosomal subunit protein uS12</fullName>
    </recommendedName>
    <alternativeName>
        <fullName evidence="4">30S ribosomal protein S12</fullName>
    </alternativeName>
</protein>
<keyword id="KW-0488">Methylation</keyword>
<keyword id="KW-1185">Reference proteome</keyword>
<keyword id="KW-0687">Ribonucleoprotein</keyword>
<keyword id="KW-0689">Ribosomal protein</keyword>
<keyword id="KW-0694">RNA-binding</keyword>
<keyword id="KW-0699">rRNA-binding</keyword>
<keyword id="KW-0820">tRNA-binding</keyword>
<comment type="function">
    <text evidence="2">With S4 and S5 plays an important role in translational accuracy.</text>
</comment>
<comment type="function">
    <text evidence="2">Interacts with and stabilizes bases of the 16S rRNA that are involved in tRNA selection in the A site and with the mRNA backbone. Located at the interface of the 30S and 50S subunits, it traverses the body of the 30S subunit contacting proteins on the other side and probably holding the rRNA structure together. The combined cluster of proteins S8, S12 and S17 appears to hold together the shoulder and platform of the 30S subunit.</text>
</comment>
<comment type="subunit">
    <text evidence="2">Part of the 30S ribosomal subunit. Contacts proteins S8 and S17. May interact with IF1 in the 30S initiation complex.</text>
</comment>
<comment type="similarity">
    <text evidence="2">Belongs to the universal ribosomal protein uS12 family.</text>
</comment>
<evidence type="ECO:0000250" key="1"/>
<evidence type="ECO:0000255" key="2">
    <source>
        <dbReference type="HAMAP-Rule" id="MF_00403"/>
    </source>
</evidence>
<evidence type="ECO:0000256" key="3">
    <source>
        <dbReference type="SAM" id="MobiDB-lite"/>
    </source>
</evidence>
<evidence type="ECO:0000305" key="4"/>
<gene>
    <name evidence="2" type="primary">rpsL</name>
    <name type="ordered locus">Clos_0487</name>
</gene>
<sequence length="140" mass="15340">MPTINQLVRKGRYVEEYKSTAPALQKGMNTLRKKATDISAPQKRGVCTSVKTVTPKKPNSALRKVARVRLTNGIEVTAYIPGIGHNLQEHSVVLIRGGRVKDLPGVRYHIVRGALDTAGVANRQQSRSKYGAKKPKAAKK</sequence>
<name>RS12_ALKOO</name>
<accession>A8MLD5</accession>
<dbReference type="EMBL" id="CP000853">
    <property type="protein sequence ID" value="ABW18049.1"/>
    <property type="molecule type" value="Genomic_DNA"/>
</dbReference>
<dbReference type="RefSeq" id="WP_012158364.1">
    <property type="nucleotide sequence ID" value="NC_009922.1"/>
</dbReference>
<dbReference type="SMR" id="A8MLD5"/>
<dbReference type="STRING" id="350688.Clos_0487"/>
<dbReference type="KEGG" id="aoe:Clos_0487"/>
<dbReference type="eggNOG" id="COG0048">
    <property type="taxonomic scope" value="Bacteria"/>
</dbReference>
<dbReference type="HOGENOM" id="CLU_104295_1_2_9"/>
<dbReference type="OrthoDB" id="9802366at2"/>
<dbReference type="Proteomes" id="UP000000269">
    <property type="component" value="Chromosome"/>
</dbReference>
<dbReference type="GO" id="GO:0015935">
    <property type="term" value="C:small ribosomal subunit"/>
    <property type="evidence" value="ECO:0007669"/>
    <property type="project" value="InterPro"/>
</dbReference>
<dbReference type="GO" id="GO:0019843">
    <property type="term" value="F:rRNA binding"/>
    <property type="evidence" value="ECO:0007669"/>
    <property type="project" value="UniProtKB-UniRule"/>
</dbReference>
<dbReference type="GO" id="GO:0003735">
    <property type="term" value="F:structural constituent of ribosome"/>
    <property type="evidence" value="ECO:0007669"/>
    <property type="project" value="InterPro"/>
</dbReference>
<dbReference type="GO" id="GO:0000049">
    <property type="term" value="F:tRNA binding"/>
    <property type="evidence" value="ECO:0007669"/>
    <property type="project" value="UniProtKB-UniRule"/>
</dbReference>
<dbReference type="GO" id="GO:0006412">
    <property type="term" value="P:translation"/>
    <property type="evidence" value="ECO:0007669"/>
    <property type="project" value="UniProtKB-UniRule"/>
</dbReference>
<dbReference type="CDD" id="cd03368">
    <property type="entry name" value="Ribosomal_S12"/>
    <property type="match status" value="1"/>
</dbReference>
<dbReference type="FunFam" id="2.40.50.140:FF:000001">
    <property type="entry name" value="30S ribosomal protein S12"/>
    <property type="match status" value="1"/>
</dbReference>
<dbReference type="Gene3D" id="2.40.50.140">
    <property type="entry name" value="Nucleic acid-binding proteins"/>
    <property type="match status" value="1"/>
</dbReference>
<dbReference type="HAMAP" id="MF_00403_B">
    <property type="entry name" value="Ribosomal_uS12_B"/>
    <property type="match status" value="1"/>
</dbReference>
<dbReference type="InterPro" id="IPR012340">
    <property type="entry name" value="NA-bd_OB-fold"/>
</dbReference>
<dbReference type="InterPro" id="IPR006032">
    <property type="entry name" value="Ribosomal_uS12"/>
</dbReference>
<dbReference type="InterPro" id="IPR005679">
    <property type="entry name" value="Ribosomal_uS12_bac"/>
</dbReference>
<dbReference type="NCBIfam" id="TIGR00981">
    <property type="entry name" value="rpsL_bact"/>
    <property type="match status" value="1"/>
</dbReference>
<dbReference type="PANTHER" id="PTHR11652">
    <property type="entry name" value="30S RIBOSOMAL PROTEIN S12 FAMILY MEMBER"/>
    <property type="match status" value="1"/>
</dbReference>
<dbReference type="Pfam" id="PF00164">
    <property type="entry name" value="Ribosom_S12_S23"/>
    <property type="match status" value="1"/>
</dbReference>
<dbReference type="PRINTS" id="PR01034">
    <property type="entry name" value="RIBOSOMALS12"/>
</dbReference>
<dbReference type="SUPFAM" id="SSF50249">
    <property type="entry name" value="Nucleic acid-binding proteins"/>
    <property type="match status" value="1"/>
</dbReference>
<dbReference type="PROSITE" id="PS00055">
    <property type="entry name" value="RIBOSOMAL_S12"/>
    <property type="match status" value="1"/>
</dbReference>
<organism>
    <name type="scientific">Alkaliphilus oremlandii (strain OhILAs)</name>
    <name type="common">Clostridium oremlandii (strain OhILAs)</name>
    <dbReference type="NCBI Taxonomy" id="350688"/>
    <lineage>
        <taxon>Bacteria</taxon>
        <taxon>Bacillati</taxon>
        <taxon>Bacillota</taxon>
        <taxon>Clostridia</taxon>
        <taxon>Peptostreptococcales</taxon>
        <taxon>Natronincolaceae</taxon>
        <taxon>Alkaliphilus</taxon>
    </lineage>
</organism>
<proteinExistence type="inferred from homology"/>
<feature type="chain" id="PRO_1000060810" description="Small ribosomal subunit protein uS12">
    <location>
        <begin position="1"/>
        <end position="140"/>
    </location>
</feature>
<feature type="region of interest" description="Disordered" evidence="3">
    <location>
        <begin position="121"/>
        <end position="140"/>
    </location>
</feature>
<feature type="compositionally biased region" description="Basic residues" evidence="3">
    <location>
        <begin position="130"/>
        <end position="140"/>
    </location>
</feature>
<feature type="modified residue" description="3-methylthioaspartic acid" evidence="1">
    <location>
        <position position="102"/>
    </location>
</feature>